<feature type="chain" id="PRO_0000244543" description="UPF0370 protein YpfN">
    <location>
        <begin position="1"/>
        <end position="66"/>
    </location>
</feature>
<feature type="transmembrane region" description="Helical" evidence="1">
    <location>
        <begin position="4"/>
        <end position="24"/>
    </location>
</feature>
<feature type="region of interest" description="Disordered" evidence="2">
    <location>
        <begin position="39"/>
        <end position="66"/>
    </location>
</feature>
<feature type="compositionally biased region" description="Basic and acidic residues" evidence="2">
    <location>
        <begin position="42"/>
        <end position="51"/>
    </location>
</feature>
<protein>
    <recommendedName>
        <fullName evidence="1">UPF0370 protein YpfN</fullName>
    </recommendedName>
</protein>
<evidence type="ECO:0000255" key="1">
    <source>
        <dbReference type="HAMAP-Rule" id="MF_01566"/>
    </source>
</evidence>
<evidence type="ECO:0000256" key="2">
    <source>
        <dbReference type="SAM" id="MobiDB-lite"/>
    </source>
</evidence>
<accession>Q8X490</accession>
<organism>
    <name type="scientific">Escherichia coli O157:H7</name>
    <dbReference type="NCBI Taxonomy" id="83334"/>
    <lineage>
        <taxon>Bacteria</taxon>
        <taxon>Pseudomonadati</taxon>
        <taxon>Pseudomonadota</taxon>
        <taxon>Gammaproteobacteria</taxon>
        <taxon>Enterobacterales</taxon>
        <taxon>Enterobacteriaceae</taxon>
        <taxon>Escherichia</taxon>
    </lineage>
</organism>
<proteinExistence type="inferred from homology"/>
<sequence length="66" mass="8071">MDWLAKYWWILVIVFLVGVLLNVIKDLKRVDHKKFLANKPELPPHRDFNDKWDDDDDWPKKDQPKK</sequence>
<name>YPFN_ECO57</name>
<gene>
    <name evidence="1" type="primary">ypfN</name>
    <name type="ordered locus">Z3731</name>
    <name type="ordered locus">ECs3334.1</name>
</gene>
<reference key="1">
    <citation type="journal article" date="2001" name="Nature">
        <title>Genome sequence of enterohaemorrhagic Escherichia coli O157:H7.</title>
        <authorList>
            <person name="Perna N.T."/>
            <person name="Plunkett G. III"/>
            <person name="Burland V."/>
            <person name="Mau B."/>
            <person name="Glasner J.D."/>
            <person name="Rose D.J."/>
            <person name="Mayhew G.F."/>
            <person name="Evans P.S."/>
            <person name="Gregor J."/>
            <person name="Kirkpatrick H.A."/>
            <person name="Posfai G."/>
            <person name="Hackett J."/>
            <person name="Klink S."/>
            <person name="Boutin A."/>
            <person name="Shao Y."/>
            <person name="Miller L."/>
            <person name="Grotbeck E.J."/>
            <person name="Davis N.W."/>
            <person name="Lim A."/>
            <person name="Dimalanta E.T."/>
            <person name="Potamousis K."/>
            <person name="Apodaca J."/>
            <person name="Anantharaman T.S."/>
            <person name="Lin J."/>
            <person name="Yen G."/>
            <person name="Schwartz D.C."/>
            <person name="Welch R.A."/>
            <person name="Blattner F.R."/>
        </authorList>
    </citation>
    <scope>NUCLEOTIDE SEQUENCE [LARGE SCALE GENOMIC DNA]</scope>
    <source>
        <strain>O157:H7 / EDL933 / ATCC 700927 / EHEC</strain>
    </source>
</reference>
<reference key="2">
    <citation type="journal article" date="2001" name="DNA Res.">
        <title>Complete genome sequence of enterohemorrhagic Escherichia coli O157:H7 and genomic comparison with a laboratory strain K-12.</title>
        <authorList>
            <person name="Hayashi T."/>
            <person name="Makino K."/>
            <person name="Ohnishi M."/>
            <person name="Kurokawa K."/>
            <person name="Ishii K."/>
            <person name="Yokoyama K."/>
            <person name="Han C.-G."/>
            <person name="Ohtsubo E."/>
            <person name="Nakayama K."/>
            <person name="Murata T."/>
            <person name="Tanaka M."/>
            <person name="Tobe T."/>
            <person name="Iida T."/>
            <person name="Takami H."/>
            <person name="Honda T."/>
            <person name="Sasakawa C."/>
            <person name="Ogasawara N."/>
            <person name="Yasunaga T."/>
            <person name="Kuhara S."/>
            <person name="Shiba T."/>
            <person name="Hattori M."/>
            <person name="Shinagawa H."/>
        </authorList>
    </citation>
    <scope>NUCLEOTIDE SEQUENCE [LARGE SCALE GENOMIC DNA]</scope>
    <source>
        <strain>O157:H7 / Sakai / RIMD 0509952 / EHEC</strain>
    </source>
</reference>
<dbReference type="EMBL" id="AE005174">
    <property type="protein sequence ID" value="AAG57582.1"/>
    <property type="molecule type" value="Genomic_DNA"/>
</dbReference>
<dbReference type="EMBL" id="BA000007">
    <property type="status" value="NOT_ANNOTATED_CDS"/>
    <property type="molecule type" value="Genomic_DNA"/>
</dbReference>
<dbReference type="PIR" id="B85890">
    <property type="entry name" value="B85890"/>
</dbReference>
<dbReference type="RefSeq" id="WP_000383836.1">
    <property type="nucleotide sequence ID" value="NZ_VOAI01000001.1"/>
</dbReference>
<dbReference type="SMR" id="Q8X490"/>
<dbReference type="STRING" id="155864.Z3731"/>
<dbReference type="KEGG" id="ece:Z3731"/>
<dbReference type="PATRIC" id="fig|83334.175.peg.6010"/>
<dbReference type="eggNOG" id="ENOG5032YJI">
    <property type="taxonomic scope" value="Bacteria"/>
</dbReference>
<dbReference type="OMA" id="DDWPQKK"/>
<dbReference type="Proteomes" id="UP000000558">
    <property type="component" value="Chromosome"/>
</dbReference>
<dbReference type="Proteomes" id="UP000002519">
    <property type="component" value="Chromosome"/>
</dbReference>
<dbReference type="GO" id="GO:0005886">
    <property type="term" value="C:plasma membrane"/>
    <property type="evidence" value="ECO:0007669"/>
    <property type="project" value="UniProtKB-SubCell"/>
</dbReference>
<dbReference type="HAMAP" id="MF_01566">
    <property type="entry name" value="UPF0370"/>
    <property type="match status" value="1"/>
</dbReference>
<dbReference type="InterPro" id="IPR020910">
    <property type="entry name" value="UPF0370"/>
</dbReference>
<dbReference type="NCBIfam" id="NF010185">
    <property type="entry name" value="PRK13664.1"/>
    <property type="match status" value="1"/>
</dbReference>
<dbReference type="Pfam" id="PF13980">
    <property type="entry name" value="UPF0370"/>
    <property type="match status" value="1"/>
</dbReference>
<comment type="subcellular location">
    <subcellularLocation>
        <location evidence="1">Cell membrane</location>
        <topology evidence="1">Single-pass membrane protein</topology>
    </subcellularLocation>
</comment>
<comment type="similarity">
    <text evidence="1">Belongs to the UPF0370 family.</text>
</comment>
<keyword id="KW-1003">Cell membrane</keyword>
<keyword id="KW-0472">Membrane</keyword>
<keyword id="KW-1185">Reference proteome</keyword>
<keyword id="KW-0812">Transmembrane</keyword>
<keyword id="KW-1133">Transmembrane helix</keyword>